<organism>
    <name type="scientific">Pyrococcus furiosus (strain ATCC 43587 / DSM 3638 / JCM 8422 / Vc1)</name>
    <dbReference type="NCBI Taxonomy" id="186497"/>
    <lineage>
        <taxon>Archaea</taxon>
        <taxon>Methanobacteriati</taxon>
        <taxon>Methanobacteriota</taxon>
        <taxon>Thermococci</taxon>
        <taxon>Thermococcales</taxon>
        <taxon>Thermococcaceae</taxon>
        <taxon>Pyrococcus</taxon>
    </lineage>
</organism>
<reference key="1">
    <citation type="journal article" date="1999" name="Genetics">
        <title>Divergence of the hyperthermophilic archaea Pyrococcus furiosus and P. horikoshii inferred from complete genomic sequences.</title>
        <authorList>
            <person name="Maeder D.L."/>
            <person name="Weiss R.B."/>
            <person name="Dunn D.M."/>
            <person name="Cherry J.L."/>
            <person name="Gonzalez J.M."/>
            <person name="DiRuggiero J."/>
            <person name="Robb F.T."/>
        </authorList>
    </citation>
    <scope>NUCLEOTIDE SEQUENCE [LARGE SCALE GENOMIC DNA]</scope>
    <source>
        <strain>ATCC 43587 / DSM 3638 / JCM 8422 / Vc1</strain>
    </source>
</reference>
<reference key="2">
    <citation type="journal article" date="2012" name="ACS Chem. Biol.">
        <title>Comparative genomics guided discovery of two missing archaeal enzyme families involved in the biosynthesis of the pterin moiety of tetrahydromethanopterin and tetrahydrofolate.</title>
        <authorList>
            <person name="Crecy-Lagard V.D."/>
            <person name="Phillips G."/>
            <person name="Grochowski L.L."/>
            <person name="Yacoubi B.E."/>
            <person name="Jenney F."/>
            <person name="Adams M.W."/>
            <person name="Murzin A.G."/>
            <person name="White R.H."/>
        </authorList>
    </citation>
    <scope>FUNCTION</scope>
    <scope>CATALYTIC ACTIVITY</scope>
    <scope>SUBSTRATE SPECIFICITY</scope>
</reference>
<keyword id="KW-0456">Lyase</keyword>
<keyword id="KW-0479">Metal-binding</keyword>
<keyword id="KW-1185">Reference proteome</keyword>
<keyword id="KW-0862">Zinc</keyword>
<name>DHNPA_PYRFU</name>
<dbReference type="EC" id="4.1.2.59" evidence="2"/>
<dbReference type="EMBL" id="AE009950">
    <property type="protein sequence ID" value="AAL81402.1"/>
    <property type="molecule type" value="Genomic_DNA"/>
</dbReference>
<dbReference type="PIR" id="T44573">
    <property type="entry name" value="T44573"/>
</dbReference>
<dbReference type="RefSeq" id="WP_011012422.1">
    <property type="nucleotide sequence ID" value="NZ_CP023154.1"/>
</dbReference>
<dbReference type="SMR" id="E7FHF1"/>
<dbReference type="STRING" id="186497.PF1278"/>
<dbReference type="PaxDb" id="186497-PF1278"/>
<dbReference type="KEGG" id="pfu:PF1278"/>
<dbReference type="PATRIC" id="fig|186497.12.peg.1340"/>
<dbReference type="eggNOG" id="arCOG02172">
    <property type="taxonomic scope" value="Archaea"/>
</dbReference>
<dbReference type="HOGENOM" id="CLU_111016_6_0_2"/>
<dbReference type="OrthoDB" id="6529at2157"/>
<dbReference type="PhylomeDB" id="E7FHF1"/>
<dbReference type="BioCyc" id="MetaCyc:MONOMER-20102"/>
<dbReference type="BRENDA" id="4.1.2.59">
    <property type="organism ID" value="5243"/>
</dbReference>
<dbReference type="Proteomes" id="UP000001013">
    <property type="component" value="Chromosome"/>
</dbReference>
<dbReference type="GO" id="GO:0016829">
    <property type="term" value="F:lyase activity"/>
    <property type="evidence" value="ECO:0007669"/>
    <property type="project" value="UniProtKB-KW"/>
</dbReference>
<dbReference type="GO" id="GO:0046872">
    <property type="term" value="F:metal ion binding"/>
    <property type="evidence" value="ECO:0007669"/>
    <property type="project" value="UniProtKB-KW"/>
</dbReference>
<dbReference type="Gene3D" id="3.30.479.10">
    <property type="entry name" value="6-pyruvoyl tetrahydropterin synthase/QueD"/>
    <property type="match status" value="1"/>
</dbReference>
<dbReference type="InterPro" id="IPR007115">
    <property type="entry name" value="6-PTP_synth/QueD"/>
</dbReference>
<dbReference type="InterPro" id="IPR038418">
    <property type="entry name" value="6-PTP_synth/QueD_sf"/>
</dbReference>
<dbReference type="PANTHER" id="PTHR12589:SF7">
    <property type="entry name" value="6-PYRUVOYL TETRAHYDROBIOPTERIN SYNTHASE"/>
    <property type="match status" value="1"/>
</dbReference>
<dbReference type="PANTHER" id="PTHR12589">
    <property type="entry name" value="PYRUVOYL TETRAHYDROBIOPTERIN SYNTHASE"/>
    <property type="match status" value="1"/>
</dbReference>
<dbReference type="Pfam" id="PF01242">
    <property type="entry name" value="PTPS"/>
    <property type="match status" value="1"/>
</dbReference>
<dbReference type="PIRSF" id="PIRSF006113">
    <property type="entry name" value="PTP_synth"/>
    <property type="match status" value="1"/>
</dbReference>
<dbReference type="SUPFAM" id="SSF55620">
    <property type="entry name" value="Tetrahydrobiopterin biosynthesis enzymes-like"/>
    <property type="match status" value="1"/>
</dbReference>
<sequence>MKARIIYRASFDAAHAVKIEEWEELHGHTFSLEVVVEGEIKKGYVMDFLKLKKVVDGVVKELDHRNLNKIMDNPTTENIALWISERIRKNLPGDVKLKRLSLWEGNEFGVELEW</sequence>
<comment type="function">
    <text evidence="2">Catalyzes the conversion of 7,8-dihydroneopterin monophosphate (H2NMP) to 6-hydroxymethyl-7,8-dihydropterin (6-HMD). Cannot use 7,8-dihydroneopterin (H2Neo) or 7,8-dihydroneopterin triphosphate (H2NTP) as substrate.</text>
</comment>
<comment type="catalytic activity">
    <reaction evidence="2">
        <text>7,8-dihydroneopterin 3'-phosphate = glycolaldehyde phosphate + 6-hydroxymethyl-7,8-dihydropterin</text>
        <dbReference type="Rhea" id="RHEA:51016"/>
        <dbReference type="ChEBI" id="CHEBI:44841"/>
        <dbReference type="ChEBI" id="CHEBI:58762"/>
        <dbReference type="ChEBI" id="CHEBI:133927"/>
        <dbReference type="EC" id="4.1.2.59"/>
    </reaction>
</comment>
<comment type="cofactor">
    <cofactor evidence="1">
        <name>Zn(2+)</name>
        <dbReference type="ChEBI" id="CHEBI:29105"/>
    </cofactor>
    <text evidence="1">Binds 1 zinc ion per subunit.</text>
</comment>
<comment type="similarity">
    <text evidence="3">Belongs to the PTPS family.</text>
</comment>
<protein>
    <recommendedName>
        <fullName>Dihydroneopterin monophosphate aldolase</fullName>
        <shortName>H2NMP aldolase</shortName>
        <ecNumber evidence="2">4.1.2.59</ecNumber>
    </recommendedName>
    <alternativeName>
        <fullName>7,8-dihydroneopterin monophosphate aldolase</fullName>
    </alternativeName>
</protein>
<accession>E7FHF1</accession>
<feature type="chain" id="PRO_0000420355" description="Dihydroneopterin monophosphate aldolase">
    <location>
        <begin position="1"/>
        <end position="114"/>
    </location>
</feature>
<feature type="binding site" evidence="1">
    <location>
        <position position="15"/>
    </location>
    <ligand>
        <name>Zn(2+)</name>
        <dbReference type="ChEBI" id="CHEBI:29105"/>
    </ligand>
</feature>
<feature type="binding site" evidence="1">
    <location>
        <position position="26"/>
    </location>
    <ligand>
        <name>Zn(2+)</name>
        <dbReference type="ChEBI" id="CHEBI:29105"/>
    </ligand>
</feature>
<feature type="binding site" evidence="1">
    <location>
        <position position="28"/>
    </location>
    <ligand>
        <name>Zn(2+)</name>
        <dbReference type="ChEBI" id="CHEBI:29105"/>
    </ligand>
</feature>
<proteinExistence type="evidence at protein level"/>
<gene>
    <name type="ordered locus">PF1278</name>
</gene>
<evidence type="ECO:0000250" key="1"/>
<evidence type="ECO:0000269" key="2">
    <source>
    </source>
</evidence>
<evidence type="ECO:0000305" key="3"/>